<proteinExistence type="evidence at protein level"/>
<evidence type="ECO:0000255" key="1">
    <source>
        <dbReference type="PROSITE-ProRule" id="PRU00070"/>
    </source>
</evidence>
<evidence type="ECO:0000256" key="2">
    <source>
        <dbReference type="SAM" id="MobiDB-lite"/>
    </source>
</evidence>
<evidence type="ECO:0000269" key="3">
    <source>
    </source>
</evidence>
<evidence type="ECO:0000303" key="4">
    <source>
    </source>
</evidence>
<evidence type="ECO:0000305" key="5"/>
<keyword id="KW-0025">Alternative splicing</keyword>
<keyword id="KW-0221">Differentiation</keyword>
<keyword id="KW-0238">DNA-binding</keyword>
<keyword id="KW-0479">Metal-binding</keyword>
<keyword id="KW-0539">Nucleus</keyword>
<keyword id="KW-1267">Proteomics identification</keyword>
<keyword id="KW-1185">Reference proteome</keyword>
<keyword id="KW-0726">Sexual differentiation</keyword>
<keyword id="KW-0804">Transcription</keyword>
<keyword id="KW-0805">Transcription regulation</keyword>
<keyword id="KW-0862">Zinc</keyword>
<dbReference type="EMBL" id="AK057404">
    <property type="protein sequence ID" value="BAB71473.1"/>
    <property type="molecule type" value="mRNA"/>
</dbReference>
<dbReference type="EMBL" id="BC029202">
    <property type="protein sequence ID" value="AAH29202.1"/>
    <property type="molecule type" value="mRNA"/>
</dbReference>
<dbReference type="EMBL" id="BC039266">
    <property type="protein sequence ID" value="AAH39266.1"/>
    <property type="molecule type" value="mRNA"/>
</dbReference>
<dbReference type="EMBL" id="AJ291669">
    <property type="protein sequence ID" value="CAC40652.1"/>
    <property type="molecule type" value="mRNA"/>
</dbReference>
<dbReference type="CCDS" id="CCDS33034.1">
    <molecule id="Q8IXT2-1"/>
</dbReference>
<dbReference type="RefSeq" id="NP_001035373.1">
    <molecule id="Q8IXT2-1"/>
    <property type="nucleotide sequence ID" value="NM_001040283.3"/>
</dbReference>
<dbReference type="SMR" id="Q8IXT2"/>
<dbReference type="BioGRID" id="122010">
    <property type="interactions" value="2"/>
</dbReference>
<dbReference type="FunCoup" id="Q8IXT2">
    <property type="interactions" value="20"/>
</dbReference>
<dbReference type="IntAct" id="Q8IXT2">
    <property type="interactions" value="2"/>
</dbReference>
<dbReference type="STRING" id="9606.ENSP00000269945"/>
<dbReference type="GlyGen" id="Q8IXT2">
    <property type="glycosylation" value="2 sites"/>
</dbReference>
<dbReference type="iPTMnet" id="Q8IXT2"/>
<dbReference type="PhosphoSitePlus" id="Q8IXT2"/>
<dbReference type="BioMuta" id="DMRTC2"/>
<dbReference type="DMDM" id="116241336"/>
<dbReference type="jPOST" id="Q8IXT2"/>
<dbReference type="MassIVE" id="Q8IXT2"/>
<dbReference type="PaxDb" id="9606-ENSP00000269945"/>
<dbReference type="PeptideAtlas" id="Q8IXT2"/>
<dbReference type="ProteomicsDB" id="71062">
    <molecule id="Q8IXT2-1"/>
</dbReference>
<dbReference type="ProteomicsDB" id="71063">
    <molecule id="Q8IXT2-2"/>
</dbReference>
<dbReference type="Antibodypedia" id="30826">
    <property type="antibodies" value="127 antibodies from 22 providers"/>
</dbReference>
<dbReference type="DNASU" id="63946"/>
<dbReference type="Ensembl" id="ENST00000269945.8">
    <molecule id="Q8IXT2-1"/>
    <property type="protein sequence ID" value="ENSP00000269945.2"/>
    <property type="gene ID" value="ENSG00000142025.16"/>
</dbReference>
<dbReference type="Ensembl" id="ENST00000601660.5">
    <molecule id="Q8IXT2-2"/>
    <property type="protein sequence ID" value="ENSP00000472159.1"/>
    <property type="gene ID" value="ENSG00000142025.16"/>
</dbReference>
<dbReference type="GeneID" id="63946"/>
<dbReference type="KEGG" id="hsa:63946"/>
<dbReference type="MANE-Select" id="ENST00000269945.8">
    <property type="protein sequence ID" value="ENSP00000269945.2"/>
    <property type="RefSeq nucleotide sequence ID" value="NM_001040283.3"/>
    <property type="RefSeq protein sequence ID" value="NP_001035373.1"/>
</dbReference>
<dbReference type="UCSC" id="uc002orr.2">
    <molecule id="Q8IXT2-1"/>
    <property type="organism name" value="human"/>
</dbReference>
<dbReference type="AGR" id="HGNC:13911"/>
<dbReference type="CTD" id="63946"/>
<dbReference type="GeneCards" id="DMRTC2"/>
<dbReference type="HGNC" id="HGNC:13911">
    <property type="gene designation" value="DMRTC2"/>
</dbReference>
<dbReference type="HPA" id="ENSG00000142025">
    <property type="expression patterns" value="Tissue enriched (testis)"/>
</dbReference>
<dbReference type="MIM" id="614806">
    <property type="type" value="gene"/>
</dbReference>
<dbReference type="neXtProt" id="NX_Q8IXT2"/>
<dbReference type="OpenTargets" id="ENSG00000142025"/>
<dbReference type="PharmGKB" id="PA27388"/>
<dbReference type="VEuPathDB" id="HostDB:ENSG00000142025"/>
<dbReference type="eggNOG" id="KOG3815">
    <property type="taxonomic scope" value="Eukaryota"/>
</dbReference>
<dbReference type="GeneTree" id="ENSGT00940000161904"/>
<dbReference type="HOGENOM" id="CLU_1250266_0_0_1"/>
<dbReference type="InParanoid" id="Q8IXT2"/>
<dbReference type="OMA" id="PLPWTPM"/>
<dbReference type="OrthoDB" id="6162476at2759"/>
<dbReference type="PAN-GO" id="Q8IXT2">
    <property type="GO annotations" value="6 GO annotations based on evolutionary models"/>
</dbReference>
<dbReference type="PhylomeDB" id="Q8IXT2"/>
<dbReference type="TreeFam" id="TF340713"/>
<dbReference type="PathwayCommons" id="Q8IXT2"/>
<dbReference type="SignaLink" id="Q8IXT2"/>
<dbReference type="BioGRID-ORCS" id="63946">
    <property type="hits" value="18 hits in 1170 CRISPR screens"/>
</dbReference>
<dbReference type="ChiTaRS" id="DMRTC2">
    <property type="organism name" value="human"/>
</dbReference>
<dbReference type="GenomeRNAi" id="63946"/>
<dbReference type="Pharos" id="Q8IXT2">
    <property type="development level" value="Tdark"/>
</dbReference>
<dbReference type="PRO" id="PR:Q8IXT2"/>
<dbReference type="Proteomes" id="UP000005640">
    <property type="component" value="Chromosome 19"/>
</dbReference>
<dbReference type="RNAct" id="Q8IXT2">
    <property type="molecule type" value="protein"/>
</dbReference>
<dbReference type="Bgee" id="ENSG00000142025">
    <property type="expression patterns" value="Expressed in right testis and 49 other cell types or tissues"/>
</dbReference>
<dbReference type="ExpressionAtlas" id="Q8IXT2">
    <property type="expression patterns" value="baseline and differential"/>
</dbReference>
<dbReference type="GO" id="GO:0000785">
    <property type="term" value="C:chromatin"/>
    <property type="evidence" value="ECO:0000247"/>
    <property type="project" value="NTNU_SB"/>
</dbReference>
<dbReference type="GO" id="GO:0005634">
    <property type="term" value="C:nucleus"/>
    <property type="evidence" value="ECO:0000318"/>
    <property type="project" value="GO_Central"/>
</dbReference>
<dbReference type="GO" id="GO:0001741">
    <property type="term" value="C:XY body"/>
    <property type="evidence" value="ECO:0007669"/>
    <property type="project" value="Ensembl"/>
</dbReference>
<dbReference type="GO" id="GO:0000981">
    <property type="term" value="F:DNA-binding transcription factor activity, RNA polymerase II-specific"/>
    <property type="evidence" value="ECO:0000247"/>
    <property type="project" value="NTNU_SB"/>
</dbReference>
<dbReference type="GO" id="GO:0042802">
    <property type="term" value="F:identical protein binding"/>
    <property type="evidence" value="ECO:0007669"/>
    <property type="project" value="Ensembl"/>
</dbReference>
<dbReference type="GO" id="GO:0046872">
    <property type="term" value="F:metal ion binding"/>
    <property type="evidence" value="ECO:0007669"/>
    <property type="project" value="UniProtKB-KW"/>
</dbReference>
<dbReference type="GO" id="GO:1990837">
    <property type="term" value="F:sequence-specific double-stranded DNA binding"/>
    <property type="evidence" value="ECO:0000314"/>
    <property type="project" value="ARUK-UCL"/>
</dbReference>
<dbReference type="GO" id="GO:0070828">
    <property type="term" value="P:heterochromatin organization"/>
    <property type="evidence" value="ECO:0007669"/>
    <property type="project" value="Ensembl"/>
</dbReference>
<dbReference type="GO" id="GO:0007141">
    <property type="term" value="P:male meiosis I"/>
    <property type="evidence" value="ECO:0007669"/>
    <property type="project" value="Ensembl"/>
</dbReference>
<dbReference type="GO" id="GO:0007548">
    <property type="term" value="P:sex differentiation"/>
    <property type="evidence" value="ECO:0007669"/>
    <property type="project" value="UniProtKB-KW"/>
</dbReference>
<dbReference type="GO" id="GO:0007290">
    <property type="term" value="P:spermatid nucleus elongation"/>
    <property type="evidence" value="ECO:0007669"/>
    <property type="project" value="Ensembl"/>
</dbReference>
<dbReference type="FunFam" id="4.10.1040.10:FF:000001">
    <property type="entry name" value="doublesex- and mab-3-related transcription factor 1"/>
    <property type="match status" value="1"/>
</dbReference>
<dbReference type="Gene3D" id="4.10.1040.10">
    <property type="entry name" value="DM DNA-binding domain"/>
    <property type="match status" value="1"/>
</dbReference>
<dbReference type="InterPro" id="IPR001275">
    <property type="entry name" value="DM_DNA-bd"/>
</dbReference>
<dbReference type="InterPro" id="IPR036407">
    <property type="entry name" value="DM_DNA-bd_sf"/>
</dbReference>
<dbReference type="InterPro" id="IPR026607">
    <property type="entry name" value="DMRT"/>
</dbReference>
<dbReference type="InterPro" id="IPR031577">
    <property type="entry name" value="DMRT-C1/C2_C"/>
</dbReference>
<dbReference type="PANTHER" id="PTHR12322">
    <property type="entry name" value="DOUBLESEX AND MAB-3 RELATED TRANSCRIPTION FACTOR DMRT"/>
    <property type="match status" value="1"/>
</dbReference>
<dbReference type="PANTHER" id="PTHR12322:SF126">
    <property type="entry name" value="DOUBLESEX- AND MAB-3-RELATED TRANSCRIPTION FACTOR C2"/>
    <property type="match status" value="1"/>
</dbReference>
<dbReference type="Pfam" id="PF00751">
    <property type="entry name" value="DM"/>
    <property type="match status" value="1"/>
</dbReference>
<dbReference type="Pfam" id="PF15791">
    <property type="entry name" value="DMRT-like"/>
    <property type="match status" value="1"/>
</dbReference>
<dbReference type="SMART" id="SM00301">
    <property type="entry name" value="DM"/>
    <property type="match status" value="1"/>
</dbReference>
<dbReference type="SUPFAM" id="SSF82927">
    <property type="entry name" value="Cysteine-rich DNA binding domain, (DM domain)"/>
    <property type="match status" value="1"/>
</dbReference>
<dbReference type="PROSITE" id="PS40000">
    <property type="entry name" value="DM_1"/>
    <property type="match status" value="1"/>
</dbReference>
<dbReference type="PROSITE" id="PS50809">
    <property type="entry name" value="DM_2"/>
    <property type="match status" value="1"/>
</dbReference>
<name>DMRTD_HUMAN</name>
<comment type="function">
    <text evidence="3">May be involved in sexual development.</text>
</comment>
<comment type="subcellular location">
    <subcellularLocation>
        <location evidence="1">Nucleus</location>
    </subcellularLocation>
</comment>
<comment type="alternative products">
    <event type="alternative splicing"/>
    <isoform>
        <id>Q8IXT2-1</id>
        <name>1</name>
        <sequence type="displayed"/>
    </isoform>
    <isoform>
        <id>Q8IXT2-2</id>
        <name>2</name>
        <sequence type="described" ref="VSP_019525 VSP_019526"/>
    </isoform>
</comment>
<comment type="tissue specificity">
    <text evidence="3">Expressed in testis and pancreas.</text>
</comment>
<comment type="miscellaneous">
    <molecule>Isoform 2</molecule>
    <text evidence="5">May be produced at very low levels due to a premature stop codon in the mRNA, leading to nonsense-mediated mRNA decay.</text>
</comment>
<comment type="similarity">
    <text evidence="5">Belongs to the DMRT family.</text>
</comment>
<reference key="1">
    <citation type="journal article" date="2004" name="Nat. Genet.">
        <title>Complete sequencing and characterization of 21,243 full-length human cDNAs.</title>
        <authorList>
            <person name="Ota T."/>
            <person name="Suzuki Y."/>
            <person name="Nishikawa T."/>
            <person name="Otsuki T."/>
            <person name="Sugiyama T."/>
            <person name="Irie R."/>
            <person name="Wakamatsu A."/>
            <person name="Hayashi K."/>
            <person name="Sato H."/>
            <person name="Nagai K."/>
            <person name="Kimura K."/>
            <person name="Makita H."/>
            <person name="Sekine M."/>
            <person name="Obayashi M."/>
            <person name="Nishi T."/>
            <person name="Shibahara T."/>
            <person name="Tanaka T."/>
            <person name="Ishii S."/>
            <person name="Yamamoto J."/>
            <person name="Saito K."/>
            <person name="Kawai Y."/>
            <person name="Isono Y."/>
            <person name="Nakamura Y."/>
            <person name="Nagahari K."/>
            <person name="Murakami K."/>
            <person name="Yasuda T."/>
            <person name="Iwayanagi T."/>
            <person name="Wagatsuma M."/>
            <person name="Shiratori A."/>
            <person name="Sudo H."/>
            <person name="Hosoiri T."/>
            <person name="Kaku Y."/>
            <person name="Kodaira H."/>
            <person name="Kondo H."/>
            <person name="Sugawara M."/>
            <person name="Takahashi M."/>
            <person name="Kanda K."/>
            <person name="Yokoi T."/>
            <person name="Furuya T."/>
            <person name="Kikkawa E."/>
            <person name="Omura Y."/>
            <person name="Abe K."/>
            <person name="Kamihara K."/>
            <person name="Katsuta N."/>
            <person name="Sato K."/>
            <person name="Tanikawa M."/>
            <person name="Yamazaki M."/>
            <person name="Ninomiya K."/>
            <person name="Ishibashi T."/>
            <person name="Yamashita H."/>
            <person name="Murakawa K."/>
            <person name="Fujimori K."/>
            <person name="Tanai H."/>
            <person name="Kimata M."/>
            <person name="Watanabe M."/>
            <person name="Hiraoka S."/>
            <person name="Chiba Y."/>
            <person name="Ishida S."/>
            <person name="Ono Y."/>
            <person name="Takiguchi S."/>
            <person name="Watanabe S."/>
            <person name="Yosida M."/>
            <person name="Hotuta T."/>
            <person name="Kusano J."/>
            <person name="Kanehori K."/>
            <person name="Takahashi-Fujii A."/>
            <person name="Hara H."/>
            <person name="Tanase T.-O."/>
            <person name="Nomura Y."/>
            <person name="Togiya S."/>
            <person name="Komai F."/>
            <person name="Hara R."/>
            <person name="Takeuchi K."/>
            <person name="Arita M."/>
            <person name="Imose N."/>
            <person name="Musashino K."/>
            <person name="Yuuki H."/>
            <person name="Oshima A."/>
            <person name="Sasaki N."/>
            <person name="Aotsuka S."/>
            <person name="Yoshikawa Y."/>
            <person name="Matsunawa H."/>
            <person name="Ichihara T."/>
            <person name="Shiohata N."/>
            <person name="Sano S."/>
            <person name="Moriya S."/>
            <person name="Momiyama H."/>
            <person name="Satoh N."/>
            <person name="Takami S."/>
            <person name="Terashima Y."/>
            <person name="Suzuki O."/>
            <person name="Nakagawa S."/>
            <person name="Senoh A."/>
            <person name="Mizoguchi H."/>
            <person name="Goto Y."/>
            <person name="Shimizu F."/>
            <person name="Wakebe H."/>
            <person name="Hishigaki H."/>
            <person name="Watanabe T."/>
            <person name="Sugiyama A."/>
            <person name="Takemoto M."/>
            <person name="Kawakami B."/>
            <person name="Yamazaki M."/>
            <person name="Watanabe K."/>
            <person name="Kumagai A."/>
            <person name="Itakura S."/>
            <person name="Fukuzumi Y."/>
            <person name="Fujimori Y."/>
            <person name="Komiyama M."/>
            <person name="Tashiro H."/>
            <person name="Tanigami A."/>
            <person name="Fujiwara T."/>
            <person name="Ono T."/>
            <person name="Yamada K."/>
            <person name="Fujii Y."/>
            <person name="Ozaki K."/>
            <person name="Hirao M."/>
            <person name="Ohmori Y."/>
            <person name="Kawabata A."/>
            <person name="Hikiji T."/>
            <person name="Kobatake N."/>
            <person name="Inagaki H."/>
            <person name="Ikema Y."/>
            <person name="Okamoto S."/>
            <person name="Okitani R."/>
            <person name="Kawakami T."/>
            <person name="Noguchi S."/>
            <person name="Itoh T."/>
            <person name="Shigeta K."/>
            <person name="Senba T."/>
            <person name="Matsumura K."/>
            <person name="Nakajima Y."/>
            <person name="Mizuno T."/>
            <person name="Morinaga M."/>
            <person name="Sasaki M."/>
            <person name="Togashi T."/>
            <person name="Oyama M."/>
            <person name="Hata H."/>
            <person name="Watanabe M."/>
            <person name="Komatsu T."/>
            <person name="Mizushima-Sugano J."/>
            <person name="Satoh T."/>
            <person name="Shirai Y."/>
            <person name="Takahashi Y."/>
            <person name="Nakagawa K."/>
            <person name="Okumura K."/>
            <person name="Nagase T."/>
            <person name="Nomura N."/>
            <person name="Kikuchi H."/>
            <person name="Masuho Y."/>
            <person name="Yamashita R."/>
            <person name="Nakai K."/>
            <person name="Yada T."/>
            <person name="Nakamura Y."/>
            <person name="Ohara O."/>
            <person name="Isogai T."/>
            <person name="Sugano S."/>
        </authorList>
    </citation>
    <scope>NUCLEOTIDE SEQUENCE [LARGE SCALE MRNA] (ISOFORM 2)</scope>
    <source>
        <tissue>Testis</tissue>
    </source>
</reference>
<reference key="2">
    <citation type="journal article" date="2004" name="Genome Res.">
        <title>The status, quality, and expansion of the NIH full-length cDNA project: the Mammalian Gene Collection (MGC).</title>
        <authorList>
            <consortium name="The MGC Project Team"/>
        </authorList>
    </citation>
    <scope>NUCLEOTIDE SEQUENCE [LARGE SCALE MRNA] (ISOFORM 1)</scope>
    <source>
        <tissue>Brain</tissue>
        <tissue>Testis</tissue>
    </source>
</reference>
<reference key="3">
    <citation type="journal article" date="2002" name="Genomics">
        <title>Novel paralogy relations among human chromosomes support a link between the phylogeny of doublesex-related genes and the evolution of sex determination.</title>
        <authorList>
            <person name="Ottolenghi C."/>
            <person name="Fellous M."/>
            <person name="Barbieri M."/>
            <person name="McElreavey K."/>
        </authorList>
    </citation>
    <scope>NUCLEOTIDE SEQUENCE [MRNA] OF 35-367 (ISOFORM 1)</scope>
    <scope>FUNCTION</scope>
    <scope>TISSUE SPECIFICITY</scope>
    <source>
        <tissue>Testis</tissue>
    </source>
</reference>
<accession>Q8IXT2</accession>
<accession>Q8N6Q2</accession>
<accession>Q96M39</accession>
<accession>Q96SD4</accession>
<protein>
    <recommendedName>
        <fullName>Doublesex- and mab-3-related transcription factor C2</fullName>
    </recommendedName>
</protein>
<organism>
    <name type="scientific">Homo sapiens</name>
    <name type="common">Human</name>
    <dbReference type="NCBI Taxonomy" id="9606"/>
    <lineage>
        <taxon>Eukaryota</taxon>
        <taxon>Metazoa</taxon>
        <taxon>Chordata</taxon>
        <taxon>Craniata</taxon>
        <taxon>Vertebrata</taxon>
        <taxon>Euteleostomi</taxon>
        <taxon>Mammalia</taxon>
        <taxon>Eutheria</taxon>
        <taxon>Euarchontoglires</taxon>
        <taxon>Primates</taxon>
        <taxon>Haplorrhini</taxon>
        <taxon>Catarrhini</taxon>
        <taxon>Hominidae</taxon>
        <taxon>Homo</taxon>
    </lineage>
</organism>
<gene>
    <name type="primary">DMRTC2</name>
</gene>
<sequence length="367" mass="39124">MEPSDMPAGYHCPLDSAPWDETRDPQSTELIPRRAISRSPTCARCRNHGVTAHLKGHKRLCLFQACECHKCVLILERRRVMAAQVALRRQQEAQLKKHLMRRGEASPKAPNHFRKGTTQPQVPSGKENIAPQPQTPHGAVLLAPTPPGKNSCGPLLLSHPPEASPLSWTPVPPGPWVPGHWLPPGFSMPPPVVCRLLYQEPAVSLPPFPGFDPGTSLQLPTHGPFTTCPGSHPVLTAPLSGEPQGPPSQPRTHSTLILQPCGTPDPLQLQPQASGASCLARTSGPSEWQLQQEAAEALVGLKDSSQAPRVTPSVPPNPAWISLLHPCGPPAPAGGRGFQPVGPCLRPSPAPSVALHIGRLGSISLLS</sequence>
<feature type="chain" id="PRO_0000244106" description="Doublesex- and mab-3-related transcription factor C2">
    <location>
        <begin position="1"/>
        <end position="367"/>
    </location>
</feature>
<feature type="DNA-binding region" description="DM" evidence="1">
    <location>
        <begin position="42"/>
        <end position="89"/>
    </location>
</feature>
<feature type="region of interest" description="Disordered" evidence="2">
    <location>
        <begin position="1"/>
        <end position="25"/>
    </location>
</feature>
<feature type="region of interest" description="Disordered" evidence="2">
    <location>
        <begin position="103"/>
        <end position="138"/>
    </location>
</feature>
<feature type="splice variant" id="VSP_019525" description="In isoform 2." evidence="4">
    <original>NSCGPLLLSHPPEASPLSWTPVPPGPWVPGHWLPPGFSMPPPVVCRLLYQEPAVSLPPFPGFDPGTSLQLPTHGP</original>
    <variation>PCTQLQPVPSAPAELLWASAAQPSPGSLALVLDSGASWPLGPWTLAASRLLHATTSGVPPAVPRTCCLSASLPWL</variation>
    <location>
        <begin position="150"/>
        <end position="224"/>
    </location>
</feature>
<feature type="splice variant" id="VSP_019526" description="In isoform 2." evidence="4">
    <location>
        <begin position="225"/>
        <end position="367"/>
    </location>
</feature>
<feature type="sequence conflict" description="In Ref. 1; BAB71473." evidence="5" ref="1">
    <original>L</original>
    <variation>H</variation>
    <location>
        <position position="73"/>
    </location>
</feature>
<feature type="sequence conflict" description="In Ref. 2; AAH39266." evidence="5" ref="2">
    <original>P</original>
    <variation>Q</variation>
    <location>
        <position position="184"/>
    </location>
</feature>